<organism>
    <name type="scientific">Yersinia enterocolitica serotype O:8 / biotype 1B (strain NCTC 13174 / 8081)</name>
    <dbReference type="NCBI Taxonomy" id="393305"/>
    <lineage>
        <taxon>Bacteria</taxon>
        <taxon>Pseudomonadati</taxon>
        <taxon>Pseudomonadota</taxon>
        <taxon>Gammaproteobacteria</taxon>
        <taxon>Enterobacterales</taxon>
        <taxon>Yersiniaceae</taxon>
        <taxon>Yersinia</taxon>
    </lineage>
</organism>
<feature type="chain" id="PRO_0000292911" description="3-ketoacyl-CoA thiolase">
    <location>
        <begin position="1"/>
        <end position="387"/>
    </location>
</feature>
<feature type="active site" description="Acyl-thioester intermediate" evidence="1">
    <location>
        <position position="91"/>
    </location>
</feature>
<feature type="active site" description="Proton acceptor" evidence="1">
    <location>
        <position position="343"/>
    </location>
</feature>
<feature type="active site" description="Proton acceptor" evidence="1">
    <location>
        <position position="373"/>
    </location>
</feature>
<protein>
    <recommendedName>
        <fullName evidence="1">3-ketoacyl-CoA thiolase</fullName>
        <ecNumber evidence="1">2.3.1.16</ecNumber>
    </recommendedName>
    <alternativeName>
        <fullName evidence="1">Acetyl-CoA acyltransferase</fullName>
    </alternativeName>
    <alternativeName>
        <fullName evidence="1">Beta-ketothiolase</fullName>
    </alternativeName>
    <alternativeName>
        <fullName evidence="1">Fatty acid oxidation complex subunit beta</fullName>
    </alternativeName>
</protein>
<keyword id="KW-0012">Acyltransferase</keyword>
<keyword id="KW-0963">Cytoplasm</keyword>
<keyword id="KW-0276">Fatty acid metabolism</keyword>
<keyword id="KW-0442">Lipid degradation</keyword>
<keyword id="KW-0443">Lipid metabolism</keyword>
<keyword id="KW-0808">Transferase</keyword>
<proteinExistence type="inferred from homology"/>
<dbReference type="EC" id="2.3.1.16" evidence="1"/>
<dbReference type="EMBL" id="AM286415">
    <property type="protein sequence ID" value="CAL10401.1"/>
    <property type="molecule type" value="Genomic_DNA"/>
</dbReference>
<dbReference type="RefSeq" id="WP_011815376.1">
    <property type="nucleotide sequence ID" value="NC_008800.1"/>
</dbReference>
<dbReference type="RefSeq" id="YP_001004652.1">
    <property type="nucleotide sequence ID" value="NC_008800.1"/>
</dbReference>
<dbReference type="SMR" id="A1JIG3"/>
<dbReference type="KEGG" id="yen:YE0267"/>
<dbReference type="PATRIC" id="fig|393305.7.peg.359"/>
<dbReference type="eggNOG" id="COG0183">
    <property type="taxonomic scope" value="Bacteria"/>
</dbReference>
<dbReference type="HOGENOM" id="CLU_031026_2_2_6"/>
<dbReference type="OrthoDB" id="9764638at2"/>
<dbReference type="UniPathway" id="UPA00659"/>
<dbReference type="Proteomes" id="UP000000642">
    <property type="component" value="Chromosome"/>
</dbReference>
<dbReference type="GO" id="GO:0005737">
    <property type="term" value="C:cytoplasm"/>
    <property type="evidence" value="ECO:0007669"/>
    <property type="project" value="UniProtKB-SubCell"/>
</dbReference>
<dbReference type="GO" id="GO:0003988">
    <property type="term" value="F:acetyl-CoA C-acyltransferase activity"/>
    <property type="evidence" value="ECO:0007669"/>
    <property type="project" value="UniProtKB-UniRule"/>
</dbReference>
<dbReference type="GO" id="GO:0006635">
    <property type="term" value="P:fatty acid beta-oxidation"/>
    <property type="evidence" value="ECO:0007669"/>
    <property type="project" value="UniProtKB-UniRule"/>
</dbReference>
<dbReference type="GO" id="GO:0010124">
    <property type="term" value="P:phenylacetate catabolic process"/>
    <property type="evidence" value="ECO:0007669"/>
    <property type="project" value="TreeGrafter"/>
</dbReference>
<dbReference type="CDD" id="cd00751">
    <property type="entry name" value="thiolase"/>
    <property type="match status" value="1"/>
</dbReference>
<dbReference type="FunFam" id="3.40.47.10:FF:000010">
    <property type="entry name" value="Acetyl-CoA acetyltransferase (Thiolase)"/>
    <property type="match status" value="1"/>
</dbReference>
<dbReference type="Gene3D" id="3.40.47.10">
    <property type="match status" value="2"/>
</dbReference>
<dbReference type="HAMAP" id="MF_01620">
    <property type="entry name" value="FadA"/>
    <property type="match status" value="1"/>
</dbReference>
<dbReference type="InterPro" id="IPR012805">
    <property type="entry name" value="FadA"/>
</dbReference>
<dbReference type="InterPro" id="IPR002155">
    <property type="entry name" value="Thiolase"/>
</dbReference>
<dbReference type="InterPro" id="IPR016039">
    <property type="entry name" value="Thiolase-like"/>
</dbReference>
<dbReference type="InterPro" id="IPR050215">
    <property type="entry name" value="Thiolase-like_sf_Thiolase"/>
</dbReference>
<dbReference type="InterPro" id="IPR020615">
    <property type="entry name" value="Thiolase_acyl_enz_int_AS"/>
</dbReference>
<dbReference type="InterPro" id="IPR020610">
    <property type="entry name" value="Thiolase_AS"/>
</dbReference>
<dbReference type="InterPro" id="IPR020617">
    <property type="entry name" value="Thiolase_C"/>
</dbReference>
<dbReference type="InterPro" id="IPR020613">
    <property type="entry name" value="Thiolase_CS"/>
</dbReference>
<dbReference type="InterPro" id="IPR020616">
    <property type="entry name" value="Thiolase_N"/>
</dbReference>
<dbReference type="NCBIfam" id="TIGR01930">
    <property type="entry name" value="AcCoA-C-Actrans"/>
    <property type="match status" value="1"/>
</dbReference>
<dbReference type="NCBIfam" id="TIGR02445">
    <property type="entry name" value="fadA"/>
    <property type="match status" value="1"/>
</dbReference>
<dbReference type="NCBIfam" id="NF006510">
    <property type="entry name" value="PRK08947.1"/>
    <property type="match status" value="1"/>
</dbReference>
<dbReference type="PANTHER" id="PTHR43853:SF11">
    <property type="entry name" value="3-KETOACYL-COA THIOLASE FADA"/>
    <property type="match status" value="1"/>
</dbReference>
<dbReference type="PANTHER" id="PTHR43853">
    <property type="entry name" value="3-KETOACYL-COA THIOLASE, PEROXISOMAL"/>
    <property type="match status" value="1"/>
</dbReference>
<dbReference type="Pfam" id="PF02803">
    <property type="entry name" value="Thiolase_C"/>
    <property type="match status" value="1"/>
</dbReference>
<dbReference type="Pfam" id="PF00108">
    <property type="entry name" value="Thiolase_N"/>
    <property type="match status" value="1"/>
</dbReference>
<dbReference type="PIRSF" id="PIRSF000429">
    <property type="entry name" value="Ac-CoA_Ac_transf"/>
    <property type="match status" value="1"/>
</dbReference>
<dbReference type="SUPFAM" id="SSF53901">
    <property type="entry name" value="Thiolase-like"/>
    <property type="match status" value="2"/>
</dbReference>
<dbReference type="PROSITE" id="PS00098">
    <property type="entry name" value="THIOLASE_1"/>
    <property type="match status" value="1"/>
</dbReference>
<dbReference type="PROSITE" id="PS00737">
    <property type="entry name" value="THIOLASE_2"/>
    <property type="match status" value="1"/>
</dbReference>
<dbReference type="PROSITE" id="PS00099">
    <property type="entry name" value="THIOLASE_3"/>
    <property type="match status" value="1"/>
</dbReference>
<evidence type="ECO:0000255" key="1">
    <source>
        <dbReference type="HAMAP-Rule" id="MF_01620"/>
    </source>
</evidence>
<comment type="function">
    <text evidence="1">Catalyzes the final step of fatty acid oxidation in which acetyl-CoA is released and the CoA ester of a fatty acid two carbons shorter is formed.</text>
</comment>
<comment type="catalytic activity">
    <reaction evidence="1">
        <text>an acyl-CoA + acetyl-CoA = a 3-oxoacyl-CoA + CoA</text>
        <dbReference type="Rhea" id="RHEA:21564"/>
        <dbReference type="ChEBI" id="CHEBI:57287"/>
        <dbReference type="ChEBI" id="CHEBI:57288"/>
        <dbReference type="ChEBI" id="CHEBI:58342"/>
        <dbReference type="ChEBI" id="CHEBI:90726"/>
        <dbReference type="EC" id="2.3.1.16"/>
    </reaction>
</comment>
<comment type="pathway">
    <text evidence="1">Lipid metabolism; fatty acid beta-oxidation.</text>
</comment>
<comment type="subunit">
    <text evidence="1">Heterotetramer of two alpha chains (FadB) and two beta chains (FadA).</text>
</comment>
<comment type="subcellular location">
    <subcellularLocation>
        <location evidence="1">Cytoplasm</location>
    </subcellularLocation>
</comment>
<comment type="similarity">
    <text evidence="1">Belongs to the thiolase-like superfamily. Thiolase family.</text>
</comment>
<name>FADA_YERE8</name>
<reference key="1">
    <citation type="journal article" date="2006" name="PLoS Genet.">
        <title>The complete genome sequence and comparative genome analysis of the high pathogenicity Yersinia enterocolitica strain 8081.</title>
        <authorList>
            <person name="Thomson N.R."/>
            <person name="Howard S."/>
            <person name="Wren B.W."/>
            <person name="Holden M.T.G."/>
            <person name="Crossman L."/>
            <person name="Challis G.L."/>
            <person name="Churcher C."/>
            <person name="Mungall K."/>
            <person name="Brooks K."/>
            <person name="Chillingworth T."/>
            <person name="Feltwell T."/>
            <person name="Abdellah Z."/>
            <person name="Hauser H."/>
            <person name="Jagels K."/>
            <person name="Maddison M."/>
            <person name="Moule S."/>
            <person name="Sanders M."/>
            <person name="Whitehead S."/>
            <person name="Quail M.A."/>
            <person name="Dougan G."/>
            <person name="Parkhill J."/>
            <person name="Prentice M.B."/>
        </authorList>
    </citation>
    <scope>NUCLEOTIDE SEQUENCE [LARGE SCALE GENOMIC DNA]</scope>
    <source>
        <strain>NCTC 13174 / 8081</strain>
    </source>
</reference>
<accession>A1JIG3</accession>
<gene>
    <name evidence="1" type="primary">fadA</name>
    <name type="synonym">oldA</name>
    <name type="ordered locus">YE0267</name>
</gene>
<sequence>MENVVIIDAVRTPMGRSKGGAFRQVRAEDLSAHLMREVLSRNPELNAAEIDDIYWGCVQQTLEQGFNIARNASLLAEIPHSVPAVTVNRLCGSSMQALHDGARAIMVGDAQVSLIGGVEHMGHVPMNHGVDFHPGMGRTVAKAAGMMGLTAEMLAKIHNISRQSQDEFAVRSHQRAYAATQADHFAKEIVATNGHDADGILKRFDFDEVIRPETNLAGLAALRPAFDPVNGTVTAGTSSALSDGASAMLIMSESRAKSLGLTPRARIRSMAVVGCDPSIMGYGPVPASQLALKRAGLKLEDIGLFELNEAFAAQSLACLKGLGLLESMDDKVNLNGGAIALGHPLGCSGARISTTLLNLMERRDVQFGLATMCIGLGQGIATIFERV</sequence>